<sequence length="453" mass="49109">MPVSRMMMESNTMAKEMAVRHHLLPGSPRRRTAHNLSSSSLRKSSDASLLHKVPCAALRSLLANLNDVLLTTRLFLLFPAVLLAIAATYLHFGQVWVFVLSLIGLVPLAERLSFLTEQIAFYTGPTVGGLLNATFGNVTEVIIALLALREGKIEVVKCSLLGSILSNLLLVLGTSLFLAGIANLRAHQPYDTKQAHVNTALLMLAVLCHSLPLMLRYAVTSGDHAIVSGDAALHLSRACSILMLIAYLAYLFFQLNTHRQLFEPQQVEDDDDDDLVIAQDDEPVLGFSSAMIWLALMTLLTALLSGYVVSTIEAASESWELSVSFISIILLPIVGNAAEHAGAVIFALKNKMDITLGVSLGSATQISMFVVPVSVIVAWTMGIPMDLDFNLLETGSLFLAILVTAFTLQEGESHYLKGLILVLCYAVISVCFFVIRRRSAGGTDGVHHLDVIV</sequence>
<organism>
    <name type="scientific">Oryza sativa subsp. japonica</name>
    <name type="common">Rice</name>
    <dbReference type="NCBI Taxonomy" id="39947"/>
    <lineage>
        <taxon>Eukaryota</taxon>
        <taxon>Viridiplantae</taxon>
        <taxon>Streptophyta</taxon>
        <taxon>Embryophyta</taxon>
        <taxon>Tracheophyta</taxon>
        <taxon>Spermatophyta</taxon>
        <taxon>Magnoliopsida</taxon>
        <taxon>Liliopsida</taxon>
        <taxon>Poales</taxon>
        <taxon>Poaceae</taxon>
        <taxon>BOP clade</taxon>
        <taxon>Oryzoideae</taxon>
        <taxon>Oryzeae</taxon>
        <taxon>Oryzinae</taxon>
        <taxon>Oryza</taxon>
        <taxon>Oryza sativa</taxon>
    </lineage>
</organism>
<gene>
    <name type="primary">CAX1b</name>
    <name type="ordered locus">Os05g0594200</name>
    <name type="ordered locus">LOC_Os05g51610</name>
    <name evidence="4" type="ORF">OsJ_19769</name>
    <name type="ORF">OSJNBa0030I14.3</name>
</gene>
<keyword id="KW-0050">Antiport</keyword>
<keyword id="KW-0106">Calcium</keyword>
<keyword id="KW-0109">Calcium transport</keyword>
<keyword id="KW-0406">Ion transport</keyword>
<keyword id="KW-0472">Membrane</keyword>
<keyword id="KW-1185">Reference proteome</keyword>
<keyword id="KW-0812">Transmembrane</keyword>
<keyword id="KW-1133">Transmembrane helix</keyword>
<keyword id="KW-0813">Transport</keyword>
<keyword id="KW-0926">Vacuole</keyword>
<evidence type="ECO:0000255" key="1"/>
<evidence type="ECO:0000269" key="2">
    <source>
    </source>
</evidence>
<evidence type="ECO:0000305" key="3"/>
<evidence type="ECO:0000312" key="4">
    <source>
        <dbReference type="EMBL" id="EEE64909.1"/>
    </source>
</evidence>
<reference key="1">
    <citation type="journal article" date="2005" name="Plant Cell Physiol.">
        <title>Expression profile of the genes for rice cation/h+ exchanger family and functional analysis in yeast.</title>
        <authorList>
            <person name="Kamiya T."/>
            <person name="Akahori T."/>
            <person name="Maeshima M."/>
        </authorList>
    </citation>
    <scope>NUCLEOTIDE SEQUENCE [MRNA]</scope>
    <scope>FUNCTION</scope>
    <scope>TISSUE SPECIFICITY</scope>
</reference>
<reference key="2">
    <citation type="journal article" date="2005" name="Mol. Genet. Genomics">
        <title>A fine physical map of the rice chromosome 5.</title>
        <authorList>
            <person name="Cheng C.-H."/>
            <person name="Chung M.C."/>
            <person name="Liu S.-M."/>
            <person name="Chen S.-K."/>
            <person name="Kao F.Y."/>
            <person name="Lin S.-J."/>
            <person name="Hsiao S.-H."/>
            <person name="Tseng I.C."/>
            <person name="Hsing Y.-I.C."/>
            <person name="Wu H.-P."/>
            <person name="Chen C.-S."/>
            <person name="Shaw J.-F."/>
            <person name="Wu J."/>
            <person name="Matsumoto T."/>
            <person name="Sasaki T."/>
            <person name="Chen H.-C."/>
            <person name="Chow T.-Y."/>
        </authorList>
    </citation>
    <scope>NUCLEOTIDE SEQUENCE [LARGE SCALE GENOMIC DNA]</scope>
    <source>
        <strain>cv. Nipponbare</strain>
    </source>
</reference>
<reference key="3">
    <citation type="journal article" date="2005" name="Nature">
        <title>The map-based sequence of the rice genome.</title>
        <authorList>
            <consortium name="International rice genome sequencing project (IRGSP)"/>
        </authorList>
    </citation>
    <scope>NUCLEOTIDE SEQUENCE [LARGE SCALE GENOMIC DNA]</scope>
    <source>
        <strain>cv. Nipponbare</strain>
    </source>
</reference>
<reference key="4">
    <citation type="journal article" date="2008" name="Nucleic Acids Res.">
        <title>The rice annotation project database (RAP-DB): 2008 update.</title>
        <authorList>
            <consortium name="The rice annotation project (RAP)"/>
        </authorList>
    </citation>
    <scope>GENOME REANNOTATION</scope>
    <source>
        <strain>cv. Nipponbare</strain>
    </source>
</reference>
<reference key="5">
    <citation type="journal article" date="2013" name="Rice">
        <title>Improvement of the Oryza sativa Nipponbare reference genome using next generation sequence and optical map data.</title>
        <authorList>
            <person name="Kawahara Y."/>
            <person name="de la Bastide M."/>
            <person name="Hamilton J.P."/>
            <person name="Kanamori H."/>
            <person name="McCombie W.R."/>
            <person name="Ouyang S."/>
            <person name="Schwartz D.C."/>
            <person name="Tanaka T."/>
            <person name="Wu J."/>
            <person name="Zhou S."/>
            <person name="Childs K.L."/>
            <person name="Davidson R.M."/>
            <person name="Lin H."/>
            <person name="Quesada-Ocampo L."/>
            <person name="Vaillancourt B."/>
            <person name="Sakai H."/>
            <person name="Lee S.S."/>
            <person name="Kim J."/>
            <person name="Numa H."/>
            <person name="Itoh T."/>
            <person name="Buell C.R."/>
            <person name="Matsumoto T."/>
        </authorList>
    </citation>
    <scope>GENOME REANNOTATION</scope>
    <source>
        <strain>cv. Nipponbare</strain>
    </source>
</reference>
<reference key="6">
    <citation type="journal article" date="2005" name="PLoS Biol.">
        <title>The genomes of Oryza sativa: a history of duplications.</title>
        <authorList>
            <person name="Yu J."/>
            <person name="Wang J."/>
            <person name="Lin W."/>
            <person name="Li S."/>
            <person name="Li H."/>
            <person name="Zhou J."/>
            <person name="Ni P."/>
            <person name="Dong W."/>
            <person name="Hu S."/>
            <person name="Zeng C."/>
            <person name="Zhang J."/>
            <person name="Zhang Y."/>
            <person name="Li R."/>
            <person name="Xu Z."/>
            <person name="Li S."/>
            <person name="Li X."/>
            <person name="Zheng H."/>
            <person name="Cong L."/>
            <person name="Lin L."/>
            <person name="Yin J."/>
            <person name="Geng J."/>
            <person name="Li G."/>
            <person name="Shi J."/>
            <person name="Liu J."/>
            <person name="Lv H."/>
            <person name="Li J."/>
            <person name="Wang J."/>
            <person name="Deng Y."/>
            <person name="Ran L."/>
            <person name="Shi X."/>
            <person name="Wang X."/>
            <person name="Wu Q."/>
            <person name="Li C."/>
            <person name="Ren X."/>
            <person name="Wang J."/>
            <person name="Wang X."/>
            <person name="Li D."/>
            <person name="Liu D."/>
            <person name="Zhang X."/>
            <person name="Ji Z."/>
            <person name="Zhao W."/>
            <person name="Sun Y."/>
            <person name="Zhang Z."/>
            <person name="Bao J."/>
            <person name="Han Y."/>
            <person name="Dong L."/>
            <person name="Ji J."/>
            <person name="Chen P."/>
            <person name="Wu S."/>
            <person name="Liu J."/>
            <person name="Xiao Y."/>
            <person name="Bu D."/>
            <person name="Tan J."/>
            <person name="Yang L."/>
            <person name="Ye C."/>
            <person name="Zhang J."/>
            <person name="Xu J."/>
            <person name="Zhou Y."/>
            <person name="Yu Y."/>
            <person name="Zhang B."/>
            <person name="Zhuang S."/>
            <person name="Wei H."/>
            <person name="Liu B."/>
            <person name="Lei M."/>
            <person name="Yu H."/>
            <person name="Li Y."/>
            <person name="Xu H."/>
            <person name="Wei S."/>
            <person name="He X."/>
            <person name="Fang L."/>
            <person name="Zhang Z."/>
            <person name="Zhang Y."/>
            <person name="Huang X."/>
            <person name="Su Z."/>
            <person name="Tong W."/>
            <person name="Li J."/>
            <person name="Tong Z."/>
            <person name="Li S."/>
            <person name="Ye J."/>
            <person name="Wang L."/>
            <person name="Fang L."/>
            <person name="Lei T."/>
            <person name="Chen C.-S."/>
            <person name="Chen H.-C."/>
            <person name="Xu Z."/>
            <person name="Li H."/>
            <person name="Huang H."/>
            <person name="Zhang F."/>
            <person name="Xu H."/>
            <person name="Li N."/>
            <person name="Zhao C."/>
            <person name="Li S."/>
            <person name="Dong L."/>
            <person name="Huang Y."/>
            <person name="Li L."/>
            <person name="Xi Y."/>
            <person name="Qi Q."/>
            <person name="Li W."/>
            <person name="Zhang B."/>
            <person name="Hu W."/>
            <person name="Zhang Y."/>
            <person name="Tian X."/>
            <person name="Jiao Y."/>
            <person name="Liang X."/>
            <person name="Jin J."/>
            <person name="Gao L."/>
            <person name="Zheng W."/>
            <person name="Hao B."/>
            <person name="Liu S.-M."/>
            <person name="Wang W."/>
            <person name="Yuan L."/>
            <person name="Cao M."/>
            <person name="McDermott J."/>
            <person name="Samudrala R."/>
            <person name="Wang J."/>
            <person name="Wong G.K.-S."/>
            <person name="Yang H."/>
        </authorList>
    </citation>
    <scope>NUCLEOTIDE SEQUENCE [LARGE SCALE GENOMIC DNA]</scope>
    <source>
        <strain>cv. Nipponbare</strain>
    </source>
</reference>
<reference key="7">
    <citation type="journal article" date="2003" name="Science">
        <title>Collection, mapping, and annotation of over 28,000 cDNA clones from japonica rice.</title>
        <authorList>
            <consortium name="The rice full-length cDNA consortium"/>
        </authorList>
    </citation>
    <scope>NUCLEOTIDE SEQUENCE [LARGE SCALE MRNA]</scope>
    <source>
        <strain>cv. Nipponbare</strain>
    </source>
</reference>
<proteinExistence type="evidence at transcript level"/>
<dbReference type="EMBL" id="AB112770">
    <property type="protein sequence ID" value="BAD83660.1"/>
    <property type="molecule type" value="mRNA"/>
</dbReference>
<dbReference type="EMBL" id="AC136217">
    <property type="protein sequence ID" value="AAV59377.1"/>
    <property type="molecule type" value="Genomic_DNA"/>
</dbReference>
<dbReference type="EMBL" id="AP008211">
    <property type="protein sequence ID" value="BAF18420.1"/>
    <property type="molecule type" value="Genomic_DNA"/>
</dbReference>
<dbReference type="EMBL" id="AP014961">
    <property type="protein sequence ID" value="BAS95656.1"/>
    <property type="molecule type" value="Genomic_DNA"/>
</dbReference>
<dbReference type="EMBL" id="CM000142">
    <property type="protein sequence ID" value="EEE64909.1"/>
    <property type="molecule type" value="Genomic_DNA"/>
</dbReference>
<dbReference type="EMBL" id="AK069021">
    <property type="protein sequence ID" value="BAG91219.1"/>
    <property type="molecule type" value="mRNA"/>
</dbReference>
<dbReference type="RefSeq" id="XP_015637691.1">
    <property type="nucleotide sequence ID" value="XM_015782205.1"/>
</dbReference>
<dbReference type="SMR" id="Q5TKG3"/>
<dbReference type="FunCoup" id="Q5TKG3">
    <property type="interactions" value="47"/>
</dbReference>
<dbReference type="STRING" id="39947.Q5TKG3"/>
<dbReference type="PaxDb" id="39947-Q5TKG3"/>
<dbReference type="EnsemblPlants" id="Os05t0594200-01">
    <property type="protein sequence ID" value="Os05t0594200-01"/>
    <property type="gene ID" value="Os05g0594200"/>
</dbReference>
<dbReference type="Gramene" id="Os05t0594200-01">
    <property type="protein sequence ID" value="Os05t0594200-01"/>
    <property type="gene ID" value="Os05g0594200"/>
</dbReference>
<dbReference type="KEGG" id="dosa:Os05g0594200"/>
<dbReference type="eggNOG" id="KOG1397">
    <property type="taxonomic scope" value="Eukaryota"/>
</dbReference>
<dbReference type="HOGENOM" id="CLU_008721_2_0_1"/>
<dbReference type="InParanoid" id="Q5TKG3"/>
<dbReference type="OMA" id="FVALHCH"/>
<dbReference type="OrthoDB" id="1699231at2759"/>
<dbReference type="Proteomes" id="UP000000763">
    <property type="component" value="Chromosome 5"/>
</dbReference>
<dbReference type="Proteomes" id="UP000007752">
    <property type="component" value="Chromosome 5"/>
</dbReference>
<dbReference type="Proteomes" id="UP000059680">
    <property type="component" value="Chromosome 5"/>
</dbReference>
<dbReference type="GO" id="GO:0009705">
    <property type="term" value="C:plant-type vacuole membrane"/>
    <property type="evidence" value="ECO:0000318"/>
    <property type="project" value="GO_Central"/>
</dbReference>
<dbReference type="GO" id="GO:0015369">
    <property type="term" value="F:calcium:proton antiporter activity"/>
    <property type="evidence" value="ECO:0000318"/>
    <property type="project" value="GO_Central"/>
</dbReference>
<dbReference type="GO" id="GO:0070588">
    <property type="term" value="P:calcium ion transmembrane transport"/>
    <property type="evidence" value="ECO:0000318"/>
    <property type="project" value="GO_Central"/>
</dbReference>
<dbReference type="GO" id="GO:0006874">
    <property type="term" value="P:intracellular calcium ion homeostasis"/>
    <property type="evidence" value="ECO:0000318"/>
    <property type="project" value="GO_Central"/>
</dbReference>
<dbReference type="FunFam" id="1.20.1420.30:FF:000008">
    <property type="entry name" value="Vacuolar cation/proton exchanger"/>
    <property type="match status" value="1"/>
</dbReference>
<dbReference type="Gene3D" id="1.20.1420.30">
    <property type="entry name" value="NCX, central ion-binding region"/>
    <property type="match status" value="1"/>
</dbReference>
<dbReference type="InterPro" id="IPR004713">
    <property type="entry name" value="CaH_exchang"/>
</dbReference>
<dbReference type="InterPro" id="IPR004798">
    <property type="entry name" value="CAX-like"/>
</dbReference>
<dbReference type="InterPro" id="IPR004837">
    <property type="entry name" value="NaCa_Exmemb"/>
</dbReference>
<dbReference type="InterPro" id="IPR044880">
    <property type="entry name" value="NCX_ion-bd_dom_sf"/>
</dbReference>
<dbReference type="NCBIfam" id="TIGR00846">
    <property type="entry name" value="caca2"/>
    <property type="match status" value="1"/>
</dbReference>
<dbReference type="NCBIfam" id="TIGR00378">
    <property type="entry name" value="cax"/>
    <property type="match status" value="1"/>
</dbReference>
<dbReference type="PANTHER" id="PTHR31503">
    <property type="entry name" value="VACUOLAR CALCIUM ION TRANSPORTER"/>
    <property type="match status" value="1"/>
</dbReference>
<dbReference type="PANTHER" id="PTHR31503:SF37">
    <property type="entry name" value="VACUOLAR CATION_PROTON EXCHANGER 1B"/>
    <property type="match status" value="1"/>
</dbReference>
<dbReference type="Pfam" id="PF01699">
    <property type="entry name" value="Na_Ca_ex"/>
    <property type="match status" value="2"/>
</dbReference>
<comment type="function">
    <text evidence="2">Vacuolar cation/proton exchanger (CAX). Translocates Ca(2+) and other metal ions into vacuoles using the proton gradient formed by H(+)-ATPase and H(+)-pyrophosphatase.</text>
</comment>
<comment type="subcellular location">
    <subcellularLocation>
        <location evidence="3">Vacuole membrane</location>
        <topology evidence="3">Multi-pass membrane protein</topology>
    </subcellularLocation>
    <text>Tonoplast.</text>
</comment>
<comment type="tissue specificity">
    <text evidence="2">Expressed in embryo and roots.</text>
</comment>
<comment type="similarity">
    <text evidence="3">Belongs to the Ca(2+):cation antiporter (CaCA) (TC 2.A.19) family. Cation/proton exchanger (CAX) subfamily.</text>
</comment>
<feature type="chain" id="PRO_0000209498" description="Vacuolar cation/proton exchanger 1b">
    <location>
        <begin position="1"/>
        <end position="453"/>
    </location>
</feature>
<feature type="topological domain" description="Cytoplasmic" evidence="1">
    <location>
        <begin position="1"/>
        <end position="67"/>
    </location>
</feature>
<feature type="transmembrane region" description="Helical" evidence="1">
    <location>
        <begin position="68"/>
        <end position="85"/>
    </location>
</feature>
<feature type="topological domain" description="Extracellular" evidence="1">
    <location>
        <begin position="86"/>
        <end position="91"/>
    </location>
</feature>
<feature type="transmembrane region" description="Helical" evidence="1">
    <location>
        <begin position="92"/>
        <end position="109"/>
    </location>
</feature>
<feature type="topological domain" description="Cytoplasmic" evidence="1">
    <location>
        <begin position="110"/>
        <end position="126"/>
    </location>
</feature>
<feature type="transmembrane region" description="Helical" evidence="1">
    <location>
        <begin position="127"/>
        <end position="147"/>
    </location>
</feature>
<feature type="topological domain" description="Extracellular" evidence="1">
    <location>
        <begin position="148"/>
        <end position="160"/>
    </location>
</feature>
<feature type="transmembrane region" description="Helical" evidence="1">
    <location>
        <begin position="161"/>
        <end position="181"/>
    </location>
</feature>
<feature type="topological domain" description="Cytoplasmic" evidence="1">
    <location>
        <begin position="182"/>
        <end position="194"/>
    </location>
</feature>
<feature type="transmembrane region" description="Helical" evidence="1">
    <location>
        <begin position="195"/>
        <end position="215"/>
    </location>
</feature>
<feature type="topological domain" description="Extracellular" evidence="1">
    <location>
        <begin position="216"/>
        <end position="232"/>
    </location>
</feature>
<feature type="transmembrane region" description="Helical" evidence="1">
    <location>
        <begin position="233"/>
        <end position="253"/>
    </location>
</feature>
<feature type="topological domain" description="Cytoplasmic" evidence="1">
    <location>
        <begin position="254"/>
        <end position="283"/>
    </location>
</feature>
<feature type="transmembrane region" description="Helical" evidence="1">
    <location>
        <begin position="284"/>
        <end position="304"/>
    </location>
</feature>
<feature type="topological domain" description="Extracellular" evidence="1">
    <location>
        <begin position="305"/>
        <end position="327"/>
    </location>
</feature>
<feature type="transmembrane region" description="Helical" evidence="1">
    <location>
        <begin position="328"/>
        <end position="348"/>
    </location>
</feature>
<feature type="topological domain" description="Cytoplasmic" evidence="1">
    <location>
        <begin position="349"/>
        <end position="364"/>
    </location>
</feature>
<feature type="transmembrane region" description="Helical" evidence="1">
    <location>
        <begin position="365"/>
        <end position="385"/>
    </location>
</feature>
<feature type="topological domain" description="Extracellular" evidence="1">
    <location>
        <begin position="386"/>
        <end position="388"/>
    </location>
</feature>
<feature type="transmembrane region" description="Helical" evidence="1">
    <location>
        <begin position="389"/>
        <end position="409"/>
    </location>
</feature>
<feature type="topological domain" description="Cytoplasmic" evidence="1">
    <location>
        <begin position="410"/>
        <end position="414"/>
    </location>
</feature>
<feature type="transmembrane region" description="Helical" evidence="1">
    <location>
        <begin position="415"/>
        <end position="435"/>
    </location>
</feature>
<feature type="topological domain" description="Extracellular" evidence="1">
    <location>
        <begin position="436"/>
        <end position="453"/>
    </location>
</feature>
<feature type="region of interest" description="Cation selection" evidence="1">
    <location>
        <begin position="136"/>
        <end position="171"/>
    </location>
</feature>
<feature type="region of interest" description="Cation selection" evidence="1">
    <location>
        <begin position="335"/>
        <end position="370"/>
    </location>
</feature>
<accession>Q5TKG3</accession>
<accession>Q0DFF3</accession>
<name>CAX1B_ORYSJ</name>
<protein>
    <recommendedName>
        <fullName>Vacuolar cation/proton exchanger 1b</fullName>
    </recommendedName>
    <alternativeName>
        <fullName>Ca(2+)/H(+) exchanger 1b</fullName>
    </alternativeName>
    <alternativeName>
        <fullName>OsCAX1b</fullName>
    </alternativeName>
</protein>